<protein>
    <recommendedName>
        <fullName>Stromal membrane-associated protein 1</fullName>
    </recommendedName>
</protein>
<name>SMAP1_HUMAN</name>
<dbReference type="EMBL" id="AY055003">
    <property type="protein sequence ID" value="AAL14714.1"/>
    <property type="molecule type" value="mRNA"/>
</dbReference>
<dbReference type="EMBL" id="AY055004">
    <property type="protein sequence ID" value="AAL14715.1"/>
    <property type="molecule type" value="mRNA"/>
</dbReference>
<dbReference type="EMBL" id="AY055015">
    <property type="protein sequence ID" value="AAL14716.1"/>
    <property type="molecule type" value="Genomic_DNA"/>
</dbReference>
<dbReference type="EMBL" id="AY055005">
    <property type="protein sequence ID" value="AAL14716.1"/>
    <property type="status" value="JOINED"/>
    <property type="molecule type" value="Genomic_DNA"/>
</dbReference>
<dbReference type="EMBL" id="AY055006">
    <property type="protein sequence ID" value="AAL14716.1"/>
    <property type="status" value="JOINED"/>
    <property type="molecule type" value="Genomic_DNA"/>
</dbReference>
<dbReference type="EMBL" id="AY055007">
    <property type="protein sequence ID" value="AAL14716.1"/>
    <property type="status" value="JOINED"/>
    <property type="molecule type" value="Genomic_DNA"/>
</dbReference>
<dbReference type="EMBL" id="AY055008">
    <property type="protein sequence ID" value="AAL14716.1"/>
    <property type="status" value="JOINED"/>
    <property type="molecule type" value="Genomic_DNA"/>
</dbReference>
<dbReference type="EMBL" id="AY055009">
    <property type="protein sequence ID" value="AAL14716.1"/>
    <property type="status" value="JOINED"/>
    <property type="molecule type" value="Genomic_DNA"/>
</dbReference>
<dbReference type="EMBL" id="AY055010">
    <property type="protein sequence ID" value="AAL14716.1"/>
    <property type="status" value="JOINED"/>
    <property type="molecule type" value="Genomic_DNA"/>
</dbReference>
<dbReference type="EMBL" id="AY055011">
    <property type="protein sequence ID" value="AAL14716.1"/>
    <property type="status" value="JOINED"/>
    <property type="molecule type" value="Genomic_DNA"/>
</dbReference>
<dbReference type="EMBL" id="AY055012">
    <property type="protein sequence ID" value="AAL14716.1"/>
    <property type="status" value="JOINED"/>
    <property type="molecule type" value="Genomic_DNA"/>
</dbReference>
<dbReference type="EMBL" id="AY055013">
    <property type="protein sequence ID" value="AAL14716.1"/>
    <property type="status" value="JOINED"/>
    <property type="molecule type" value="Genomic_DNA"/>
</dbReference>
<dbReference type="EMBL" id="AY055014">
    <property type="protein sequence ID" value="AAL14716.1"/>
    <property type="status" value="JOINED"/>
    <property type="molecule type" value="Genomic_DNA"/>
</dbReference>
<dbReference type="EMBL" id="AY055015">
    <property type="protein sequence ID" value="AAL14717.1"/>
    <property type="molecule type" value="Genomic_DNA"/>
</dbReference>
<dbReference type="EMBL" id="AY055005">
    <property type="protein sequence ID" value="AAL14717.1"/>
    <property type="status" value="JOINED"/>
    <property type="molecule type" value="Genomic_DNA"/>
</dbReference>
<dbReference type="EMBL" id="AY055006">
    <property type="protein sequence ID" value="AAL14717.1"/>
    <property type="status" value="JOINED"/>
    <property type="molecule type" value="Genomic_DNA"/>
</dbReference>
<dbReference type="EMBL" id="AY055007">
    <property type="protein sequence ID" value="AAL14717.1"/>
    <property type="status" value="JOINED"/>
    <property type="molecule type" value="Genomic_DNA"/>
</dbReference>
<dbReference type="EMBL" id="AY055008">
    <property type="protein sequence ID" value="AAL14717.1"/>
    <property type="status" value="JOINED"/>
    <property type="molecule type" value="Genomic_DNA"/>
</dbReference>
<dbReference type="EMBL" id="AY055010">
    <property type="protein sequence ID" value="AAL14717.1"/>
    <property type="status" value="JOINED"/>
    <property type="molecule type" value="Genomic_DNA"/>
</dbReference>
<dbReference type="EMBL" id="AY055011">
    <property type="protein sequence ID" value="AAL14717.1"/>
    <property type="status" value="JOINED"/>
    <property type="molecule type" value="Genomic_DNA"/>
</dbReference>
<dbReference type="EMBL" id="AY055012">
    <property type="protein sequence ID" value="AAL14717.1"/>
    <property type="status" value="JOINED"/>
    <property type="molecule type" value="Genomic_DNA"/>
</dbReference>
<dbReference type="EMBL" id="AY055013">
    <property type="protein sequence ID" value="AAL14717.1"/>
    <property type="status" value="JOINED"/>
    <property type="molecule type" value="Genomic_DNA"/>
</dbReference>
<dbReference type="EMBL" id="AY055014">
    <property type="protein sequence ID" value="AAL14717.1"/>
    <property type="status" value="JOINED"/>
    <property type="molecule type" value="Genomic_DNA"/>
</dbReference>
<dbReference type="EMBL" id="AK023221">
    <property type="protein sequence ID" value="BAB14473.1"/>
    <property type="molecule type" value="mRNA"/>
</dbReference>
<dbReference type="EMBL" id="AF442495">
    <property type="protein sequence ID" value="AAP97320.1"/>
    <property type="molecule type" value="mRNA"/>
</dbReference>
<dbReference type="EMBL" id="AK222711">
    <property type="protein sequence ID" value="BAD96431.1"/>
    <property type="molecule type" value="mRNA"/>
</dbReference>
<dbReference type="EMBL" id="AL354943">
    <property type="status" value="NOT_ANNOTATED_CDS"/>
    <property type="molecule type" value="Genomic_DNA"/>
</dbReference>
<dbReference type="EMBL" id="AL591049">
    <property type="status" value="NOT_ANNOTATED_CDS"/>
    <property type="molecule type" value="Genomic_DNA"/>
</dbReference>
<dbReference type="EMBL" id="AL121961">
    <property type="status" value="NOT_ANNOTATED_CDS"/>
    <property type="molecule type" value="Genomic_DNA"/>
</dbReference>
<dbReference type="EMBL" id="BC008672">
    <property type="protein sequence ID" value="AAH08672.1"/>
    <property type="status" value="ALT_SEQ"/>
    <property type="molecule type" value="mRNA"/>
</dbReference>
<dbReference type="EMBL" id="BC028074">
    <property type="protein sequence ID" value="AAH28074.1"/>
    <property type="molecule type" value="mRNA"/>
</dbReference>
<dbReference type="EMBL" id="BC036123">
    <property type="protein sequence ID" value="AAH36123.1"/>
    <property type="molecule type" value="mRNA"/>
</dbReference>
<dbReference type="EMBL" id="AL833906">
    <property type="protein sequence ID" value="CAD38762.1"/>
    <property type="molecule type" value="mRNA"/>
</dbReference>
<dbReference type="CCDS" id="CCDS43478.1">
    <molecule id="Q8IYB5-1"/>
</dbReference>
<dbReference type="CCDS" id="CCDS4973.1">
    <molecule id="Q8IYB5-2"/>
</dbReference>
<dbReference type="CCDS" id="CCDS64459.1">
    <molecule id="Q8IYB5-3"/>
</dbReference>
<dbReference type="RefSeq" id="NP_001037770.1">
    <molecule id="Q8IYB5-1"/>
    <property type="nucleotide sequence ID" value="NM_001044305.3"/>
</dbReference>
<dbReference type="RefSeq" id="NP_001268368.1">
    <molecule id="Q8IYB5-3"/>
    <property type="nucleotide sequence ID" value="NM_001281439.2"/>
</dbReference>
<dbReference type="RefSeq" id="NP_001268369.1">
    <property type="nucleotide sequence ID" value="NM_001281440.1"/>
</dbReference>
<dbReference type="RefSeq" id="NP_068759.2">
    <molecule id="Q8IYB5-2"/>
    <property type="nucleotide sequence ID" value="NM_021940.4"/>
</dbReference>
<dbReference type="PDB" id="2CRR">
    <property type="method" value="NMR"/>
    <property type="chains" value="A=9-136"/>
</dbReference>
<dbReference type="PDBsum" id="2CRR"/>
<dbReference type="SMR" id="Q8IYB5"/>
<dbReference type="BioGRID" id="121956">
    <property type="interactions" value="67"/>
</dbReference>
<dbReference type="FunCoup" id="Q8IYB5">
    <property type="interactions" value="2110"/>
</dbReference>
<dbReference type="IntAct" id="Q8IYB5">
    <property type="interactions" value="25"/>
</dbReference>
<dbReference type="MINT" id="Q8IYB5"/>
<dbReference type="STRING" id="9606.ENSP00000359484"/>
<dbReference type="GlyGen" id="Q8IYB5">
    <property type="glycosylation" value="2 sites, 1 O-linked glycan (1 site)"/>
</dbReference>
<dbReference type="iPTMnet" id="Q8IYB5"/>
<dbReference type="PhosphoSitePlus" id="Q8IYB5"/>
<dbReference type="SwissPalm" id="Q8IYB5"/>
<dbReference type="BioMuta" id="SMAP1"/>
<dbReference type="DMDM" id="97190718"/>
<dbReference type="jPOST" id="Q8IYB5"/>
<dbReference type="MassIVE" id="Q8IYB5"/>
<dbReference type="PaxDb" id="9606-ENSP00000359484"/>
<dbReference type="PeptideAtlas" id="Q8IYB5"/>
<dbReference type="ProteomicsDB" id="71145">
    <molecule id="Q8IYB5-1"/>
</dbReference>
<dbReference type="ProteomicsDB" id="71146">
    <molecule id="Q8IYB5-2"/>
</dbReference>
<dbReference type="ProteomicsDB" id="71147">
    <molecule id="Q8IYB5-3"/>
</dbReference>
<dbReference type="Pumba" id="Q8IYB5"/>
<dbReference type="Antibodypedia" id="31248">
    <property type="antibodies" value="146 antibodies from 25 providers"/>
</dbReference>
<dbReference type="DNASU" id="60682"/>
<dbReference type="Ensembl" id="ENST00000316999.9">
    <molecule id="Q8IYB5-2"/>
    <property type="protein sequence ID" value="ENSP00000313382.5"/>
    <property type="gene ID" value="ENSG00000112305.15"/>
</dbReference>
<dbReference type="Ensembl" id="ENST00000370452.7">
    <molecule id="Q8IYB5-3"/>
    <property type="protein sequence ID" value="ENSP00000359481.3"/>
    <property type="gene ID" value="ENSG00000112305.15"/>
</dbReference>
<dbReference type="Ensembl" id="ENST00000370455.8">
    <molecule id="Q8IYB5-1"/>
    <property type="protein sequence ID" value="ENSP00000359484.3"/>
    <property type="gene ID" value="ENSG00000112305.15"/>
</dbReference>
<dbReference type="GeneID" id="60682"/>
<dbReference type="KEGG" id="hsa:60682"/>
<dbReference type="MANE-Select" id="ENST00000370455.8">
    <property type="protein sequence ID" value="ENSP00000359484.3"/>
    <property type="RefSeq nucleotide sequence ID" value="NM_001044305.3"/>
    <property type="RefSeq protein sequence ID" value="NP_001037770.1"/>
</dbReference>
<dbReference type="UCSC" id="uc003pfr.5">
    <molecule id="Q8IYB5-1"/>
    <property type="organism name" value="human"/>
</dbReference>
<dbReference type="AGR" id="HGNC:19651"/>
<dbReference type="CTD" id="60682"/>
<dbReference type="DisGeNET" id="60682"/>
<dbReference type="GeneCards" id="SMAP1"/>
<dbReference type="HGNC" id="HGNC:19651">
    <property type="gene designation" value="SMAP1"/>
</dbReference>
<dbReference type="HPA" id="ENSG00000112305">
    <property type="expression patterns" value="Low tissue specificity"/>
</dbReference>
<dbReference type="MIM" id="611372">
    <property type="type" value="gene"/>
</dbReference>
<dbReference type="neXtProt" id="NX_Q8IYB5"/>
<dbReference type="OpenTargets" id="ENSG00000112305"/>
<dbReference type="PharmGKB" id="PA134893764"/>
<dbReference type="VEuPathDB" id="HostDB:ENSG00000112305"/>
<dbReference type="eggNOG" id="KOG0703">
    <property type="taxonomic scope" value="Eukaryota"/>
</dbReference>
<dbReference type="GeneTree" id="ENSGT00940000155884"/>
<dbReference type="HOGENOM" id="CLU_023062_5_0_1"/>
<dbReference type="InParanoid" id="Q8IYB5"/>
<dbReference type="OMA" id="IPSNNGW"/>
<dbReference type="OrthoDB" id="10266696at2759"/>
<dbReference type="PAN-GO" id="Q8IYB5">
    <property type="GO annotations" value="2 GO annotations based on evolutionary models"/>
</dbReference>
<dbReference type="PhylomeDB" id="Q8IYB5"/>
<dbReference type="TreeFam" id="TF313876"/>
<dbReference type="PathwayCommons" id="Q8IYB5"/>
<dbReference type="SignaLink" id="Q8IYB5"/>
<dbReference type="BioGRID-ORCS" id="60682">
    <property type="hits" value="6 hits in 1151 CRISPR screens"/>
</dbReference>
<dbReference type="ChiTaRS" id="SMAP1">
    <property type="organism name" value="human"/>
</dbReference>
<dbReference type="EvolutionaryTrace" id="Q8IYB5"/>
<dbReference type="GeneWiki" id="SMAP1"/>
<dbReference type="GenomeRNAi" id="60682"/>
<dbReference type="Pharos" id="Q8IYB5">
    <property type="development level" value="Tbio"/>
</dbReference>
<dbReference type="PRO" id="PR:Q8IYB5"/>
<dbReference type="Proteomes" id="UP000005640">
    <property type="component" value="Chromosome 6"/>
</dbReference>
<dbReference type="RNAct" id="Q8IYB5">
    <property type="molecule type" value="protein"/>
</dbReference>
<dbReference type="Bgee" id="ENSG00000112305">
    <property type="expression patterns" value="Expressed in cortical plate and 214 other cell types or tissues"/>
</dbReference>
<dbReference type="ExpressionAtlas" id="Q8IYB5">
    <property type="expression patterns" value="baseline and differential"/>
</dbReference>
<dbReference type="GO" id="GO:0005737">
    <property type="term" value="C:cytoplasm"/>
    <property type="evidence" value="ECO:0000318"/>
    <property type="project" value="GO_Central"/>
</dbReference>
<dbReference type="GO" id="GO:0005886">
    <property type="term" value="C:plasma membrane"/>
    <property type="evidence" value="ECO:0007669"/>
    <property type="project" value="UniProtKB-SubCell"/>
</dbReference>
<dbReference type="GO" id="GO:0030276">
    <property type="term" value="F:clathrin binding"/>
    <property type="evidence" value="ECO:0007669"/>
    <property type="project" value="Ensembl"/>
</dbReference>
<dbReference type="GO" id="GO:0005096">
    <property type="term" value="F:GTPase activator activity"/>
    <property type="evidence" value="ECO:0000318"/>
    <property type="project" value="GO_Central"/>
</dbReference>
<dbReference type="GO" id="GO:0008270">
    <property type="term" value="F:zinc ion binding"/>
    <property type="evidence" value="ECO:0007669"/>
    <property type="project" value="UniProtKB-KW"/>
</dbReference>
<dbReference type="GO" id="GO:0045648">
    <property type="term" value="P:positive regulation of erythrocyte differentiation"/>
    <property type="evidence" value="ECO:0007669"/>
    <property type="project" value="Ensembl"/>
</dbReference>
<dbReference type="GO" id="GO:2000369">
    <property type="term" value="P:regulation of clathrin-dependent endocytosis"/>
    <property type="evidence" value="ECO:0000318"/>
    <property type="project" value="GO_Central"/>
</dbReference>
<dbReference type="CDD" id="cd08839">
    <property type="entry name" value="ArfGap_SMAP"/>
    <property type="match status" value="1"/>
</dbReference>
<dbReference type="FunFam" id="1.10.220.150:FF:000009">
    <property type="entry name" value="stromal membrane-associated protein 1 isoform X1"/>
    <property type="match status" value="1"/>
</dbReference>
<dbReference type="Gene3D" id="1.10.220.150">
    <property type="entry name" value="Arf GTPase activating protein"/>
    <property type="match status" value="1"/>
</dbReference>
<dbReference type="InterPro" id="IPR051718">
    <property type="entry name" value="ARF_GTPase-activating"/>
</dbReference>
<dbReference type="InterPro" id="IPR037278">
    <property type="entry name" value="ARFGAP/RecO"/>
</dbReference>
<dbReference type="InterPro" id="IPR001164">
    <property type="entry name" value="ArfGAP_dom"/>
</dbReference>
<dbReference type="InterPro" id="IPR038508">
    <property type="entry name" value="ArfGAP_dom_sf"/>
</dbReference>
<dbReference type="InterPro" id="IPR044732">
    <property type="entry name" value="ArfGAP_SMAP1-like"/>
</dbReference>
<dbReference type="PANTHER" id="PTHR45705">
    <property type="entry name" value="FI20236P1"/>
    <property type="match status" value="1"/>
</dbReference>
<dbReference type="PANTHER" id="PTHR45705:SF8">
    <property type="entry name" value="STROMAL MEMBRANE-ASSOCIATED PROTEIN 1"/>
    <property type="match status" value="1"/>
</dbReference>
<dbReference type="Pfam" id="PF01412">
    <property type="entry name" value="ArfGap"/>
    <property type="match status" value="1"/>
</dbReference>
<dbReference type="PRINTS" id="PR00405">
    <property type="entry name" value="REVINTRACTNG"/>
</dbReference>
<dbReference type="SMART" id="SM00105">
    <property type="entry name" value="ArfGap"/>
    <property type="match status" value="1"/>
</dbReference>
<dbReference type="SUPFAM" id="SSF57863">
    <property type="entry name" value="ArfGap/RecO-like zinc finger"/>
    <property type="match status" value="1"/>
</dbReference>
<dbReference type="PROSITE" id="PS50115">
    <property type="entry name" value="ARFGAP"/>
    <property type="match status" value="1"/>
</dbReference>
<sequence length="467" mass="50386">MATRSCREKAQKLNEQHQLILSKLLREEDNKYCADCEAKGPRWASWNIGVFICIRCAGIHRNLGVHISRVKSVNLDQWTAEQIQCMQDMGNTKARLLYEANLPENFRRPQTDQAVEFFIRDKYEKKKYYDKNAIAITNISSSDAPLQPLVSSPSLQAAVDKNKLEKEKEKKKEEKKREKEPEKPAKPLTAEKLQKKDQQLEPKKSTSPKKAAEPTVDLLGLDGPAVAPVTNGNTTVPPLNDDLDIFGPMISNPLPATVMPPAQGTPSAPAAATLSTVTSGDLDLFTEQTTKSEEVAKKQLSKDSILSLYGTGTIQQQSTPGVFMGPTNIPFTSQAPAAFQGFPSMGVPVPAAPGLIGNVMGQSPSMMVGMPMPNGFMGNAQTGVMPLPQNVVGPQGGMVGQMGAPQSKFGLPQAQQPQWSLSQMNQQMAGMSISSATPTAGFGQPSSTTAGWSGSSSGQTLSTQLWK</sequence>
<feature type="chain" id="PRO_0000235838" description="Stromal membrane-associated protein 1">
    <location>
        <begin position="1"/>
        <end position="467"/>
    </location>
</feature>
<feature type="domain" description="Arf-GAP" evidence="2">
    <location>
        <begin position="18"/>
        <end position="136"/>
    </location>
</feature>
<feature type="zinc finger region" description="C4-type" evidence="2">
    <location>
        <begin position="33"/>
        <end position="56"/>
    </location>
</feature>
<feature type="region of interest" description="Disordered" evidence="3">
    <location>
        <begin position="145"/>
        <end position="224"/>
    </location>
</feature>
<feature type="region of interest" description="Disordered" evidence="3">
    <location>
        <begin position="408"/>
        <end position="467"/>
    </location>
</feature>
<feature type="short sequence motif" description="Interaction with clathrin heavy chains" evidence="1">
    <location>
        <begin position="218"/>
        <end position="222"/>
    </location>
</feature>
<feature type="compositionally biased region" description="Polar residues" evidence="3">
    <location>
        <begin position="145"/>
        <end position="155"/>
    </location>
</feature>
<feature type="compositionally biased region" description="Basic and acidic residues" evidence="3">
    <location>
        <begin position="160"/>
        <end position="185"/>
    </location>
</feature>
<feature type="compositionally biased region" description="Basic and acidic residues" evidence="3">
    <location>
        <begin position="192"/>
        <end position="204"/>
    </location>
</feature>
<feature type="compositionally biased region" description="Polar residues" evidence="3">
    <location>
        <begin position="413"/>
        <end position="438"/>
    </location>
</feature>
<feature type="compositionally biased region" description="Low complexity" evidence="3">
    <location>
        <begin position="446"/>
        <end position="467"/>
    </location>
</feature>
<feature type="splice variant" id="VSP_018502" description="In isoform 2 and isoform 3." evidence="6 7 8 9">
    <location>
        <begin position="139"/>
        <end position="165"/>
    </location>
</feature>
<feature type="splice variant" id="VSP_018503" description="In isoform 3." evidence="7">
    <original>MNQQMAGMSISSATPTAGFGQPSSTTAGWSGSSSGQTLSTQLWK</original>
    <variation>IMQKGDAVLQHSISAIYWPMTRWLKCPLVDESADGWHEYQ</variation>
    <location>
        <begin position="424"/>
        <end position="467"/>
    </location>
</feature>
<feature type="sequence variant" id="VAR_048326" description="In dbSNP:rs2273566." evidence="5">
    <original>A</original>
    <variation>V</variation>
    <location>
        <position position="212"/>
    </location>
</feature>
<feature type="sequence conflict" description="In Ref. 6; AAH36123." evidence="10" ref="6">
    <original>P</original>
    <variation>H</variation>
    <location>
        <position position="394"/>
    </location>
</feature>
<feature type="turn" evidence="11">
    <location>
        <begin position="10"/>
        <end position="15"/>
    </location>
</feature>
<feature type="helix" evidence="11">
    <location>
        <begin position="17"/>
        <end position="26"/>
    </location>
</feature>
<feature type="helix" evidence="11">
    <location>
        <begin position="28"/>
        <end position="30"/>
    </location>
</feature>
<feature type="strand" evidence="11">
    <location>
        <begin position="34"/>
        <end position="36"/>
    </location>
</feature>
<feature type="strand" evidence="11">
    <location>
        <begin position="43"/>
        <end position="45"/>
    </location>
</feature>
<feature type="turn" evidence="11">
    <location>
        <begin position="46"/>
        <end position="49"/>
    </location>
</feature>
<feature type="helix" evidence="11">
    <location>
        <begin position="54"/>
        <end position="63"/>
    </location>
</feature>
<feature type="turn" evidence="11">
    <location>
        <begin position="65"/>
        <end position="67"/>
    </location>
</feature>
<feature type="strand" evidence="11">
    <location>
        <begin position="73"/>
        <end position="76"/>
    </location>
</feature>
<feature type="helix" evidence="11">
    <location>
        <begin position="80"/>
        <end position="88"/>
    </location>
</feature>
<feature type="helix" evidence="11">
    <location>
        <begin position="90"/>
        <end position="97"/>
    </location>
</feature>
<feature type="helix" evidence="11">
    <location>
        <begin position="98"/>
        <end position="100"/>
    </location>
</feature>
<feature type="helix" evidence="11">
    <location>
        <begin position="112"/>
        <end position="123"/>
    </location>
</feature>
<feature type="helix" evidence="11">
    <location>
        <begin position="132"/>
        <end position="134"/>
    </location>
</feature>
<comment type="function">
    <text evidence="1">GTPase activating protein that acts on ARF6. Plays a role in clathrin-dependent endocytosis. May play a role in erythropoiesis (By similarity).</text>
</comment>
<comment type="subunit">
    <text evidence="1">Interacts with ARF6. Interacts with clathrin heavy chains via the clathrin box-like motif (By similarity).</text>
</comment>
<comment type="interaction">
    <interactant intactId="EBI-12061577">
        <id>Q8IYB5-2</id>
    </interactant>
    <interactant intactId="EBI-6557414">
        <id>Q9NZN9</id>
        <label>AIPL1</label>
    </interactant>
    <organismsDiffer>false</organismsDiffer>
    <experiments>3</experiments>
</comment>
<comment type="interaction">
    <interactant intactId="EBI-12061577">
        <id>Q8IYB5-2</id>
    </interactant>
    <interactant intactId="EBI-748171">
        <id>O43186</id>
        <label>CRX</label>
    </interactant>
    <organismsDiffer>false</organismsDiffer>
    <experiments>3</experiments>
</comment>
<comment type="interaction">
    <interactant intactId="EBI-12061577">
        <id>Q8IYB5-2</id>
    </interactant>
    <interactant intactId="EBI-11956831">
        <id>Q13952-2</id>
        <label>NFYC</label>
    </interactant>
    <organismsDiffer>false</organismsDiffer>
    <experiments>3</experiments>
</comment>
<comment type="interaction">
    <interactant intactId="EBI-12061577">
        <id>Q8IYB5-2</id>
    </interactant>
    <interactant intactId="EBI-741158">
        <id>Q96HA8</id>
        <label>NTAQ1</label>
    </interactant>
    <organismsDiffer>false</organismsDiffer>
    <experiments>3</experiments>
</comment>
<comment type="interaction">
    <interactant intactId="EBI-12061577">
        <id>Q8IYB5-2</id>
    </interactant>
    <interactant intactId="EBI-357275">
        <id>Q99471</id>
        <label>PFDN5</label>
    </interactant>
    <organismsDiffer>false</organismsDiffer>
    <experiments>3</experiments>
</comment>
<comment type="interaction">
    <interactant intactId="EBI-12061577">
        <id>Q8IYB5-2</id>
    </interactant>
    <interactant intactId="EBI-12754095">
        <id>P86480</id>
        <label>PRR20D</label>
    </interactant>
    <organismsDiffer>false</organismsDiffer>
    <experiments>6</experiments>
</comment>
<comment type="interaction">
    <interactant intactId="EBI-12061577">
        <id>Q8IYB5-2</id>
    </interactant>
    <interactant intactId="EBI-2798044">
        <id>Q2TAL8</id>
        <label>QRICH1</label>
    </interactant>
    <organismsDiffer>false</organismsDiffer>
    <experiments>3</experiments>
</comment>
<comment type="interaction">
    <interactant intactId="EBI-12061577">
        <id>Q8IYB5-2</id>
    </interactant>
    <interactant intactId="EBI-740343">
        <id>Q93062-3</id>
        <label>RBPMS</label>
    </interactant>
    <organismsDiffer>false</organismsDiffer>
    <experiments>3</experiments>
</comment>
<comment type="interaction">
    <interactant intactId="EBI-12061577">
        <id>Q8IYB5-2</id>
    </interactant>
    <interactant intactId="EBI-2822515">
        <id>Q8WU79</id>
        <label>SMAP2</label>
    </interactant>
    <organismsDiffer>false</organismsDiffer>
    <experiments>3</experiments>
</comment>
<comment type="subcellular location">
    <subcellularLocation>
        <location evidence="1">Cell membrane</location>
        <topology evidence="1">Peripheral membrane protein</topology>
        <orientation evidence="1">Cytoplasmic side</orientation>
    </subcellularLocation>
</comment>
<comment type="alternative products">
    <event type="alternative splicing"/>
    <isoform>
        <id>Q8IYB5-1</id>
        <name>1</name>
        <name>SMAP1A</name>
        <sequence type="displayed"/>
    </isoform>
    <isoform>
        <id>Q8IYB5-2</id>
        <name>2</name>
        <name>SMAP1B</name>
        <sequence type="described" ref="VSP_018502"/>
    </isoform>
    <isoform>
        <id>Q8IYB5-3</id>
        <name>3</name>
        <sequence type="described" ref="VSP_018502 VSP_018503"/>
    </isoform>
</comment>
<comment type="tissue specificity">
    <text evidence="4">Detected in bone marrow, adrenal gland, trachea, lymph node, spinal cord, peripheral blood leukocytes, thyroid and stomach.</text>
</comment>
<comment type="sequence caution" evidence="10">
    <conflict type="miscellaneous discrepancy">
        <sequence resource="EMBL-CDS" id="AAH08672"/>
    </conflict>
    <text>Contaminating sequence. Potential poly-A sequence.</text>
</comment>
<comment type="online information" name="Atlas of Genetics and Cytogenetics in Oncology and Haematology">
    <link uri="https://atlasgeneticsoncology.org/gene/42974/SMAP1"/>
</comment>
<evidence type="ECO:0000250" key="1"/>
<evidence type="ECO:0000255" key="2">
    <source>
        <dbReference type="PROSITE-ProRule" id="PRU00288"/>
    </source>
</evidence>
<evidence type="ECO:0000256" key="3">
    <source>
        <dbReference type="SAM" id="MobiDB-lite"/>
    </source>
</evidence>
<evidence type="ECO:0000269" key="4">
    <source>
    </source>
</evidence>
<evidence type="ECO:0000269" key="5">
    <source ref="4"/>
</evidence>
<evidence type="ECO:0000303" key="6">
    <source>
    </source>
</evidence>
<evidence type="ECO:0000303" key="7">
    <source>
    </source>
</evidence>
<evidence type="ECO:0000303" key="8">
    <source>
    </source>
</evidence>
<evidence type="ECO:0000303" key="9">
    <source ref="4"/>
</evidence>
<evidence type="ECO:0000305" key="10"/>
<evidence type="ECO:0007829" key="11">
    <source>
        <dbReference type="PDB" id="2CRR"/>
    </source>
</evidence>
<keyword id="KW-0002">3D-structure</keyword>
<keyword id="KW-0025">Alternative splicing</keyword>
<keyword id="KW-1003">Cell membrane</keyword>
<keyword id="KW-0343">GTPase activation</keyword>
<keyword id="KW-0472">Membrane</keyword>
<keyword id="KW-0479">Metal-binding</keyword>
<keyword id="KW-1267">Proteomics identification</keyword>
<keyword id="KW-1185">Reference proteome</keyword>
<keyword id="KW-0862">Zinc</keyword>
<keyword id="KW-0863">Zinc-finger</keyword>
<accession>Q8IYB5</accession>
<accession>Q53H70</accession>
<accession>Q5SYQ2</accession>
<accession>Q6PK24</accession>
<accession>Q8NDH4</accession>
<accession>Q96L38</accession>
<accession>Q96L39</accession>
<accession>Q9H8X4</accession>
<proteinExistence type="evidence at protein level"/>
<reference key="1">
    <citation type="journal article" date="2002" name="Gene">
        <title>Cloning, characterization and chromosome mapping of the human SMAP1 gene.</title>
        <authorList>
            <person name="Marcos I."/>
            <person name="Borrego S."/>
            <person name="Rodriguez de Cordoba S."/>
            <person name="Galan J.J."/>
            <person name="Antinolo G."/>
        </authorList>
    </citation>
    <scope>NUCLEOTIDE SEQUENCE [GENOMIC DNA / MRNA] (ISOFORMS 1 AND 2)</scope>
    <scope>TISSUE SPECIFICITY</scope>
    <source>
        <tissue>Blood</tissue>
        <tissue>Bone marrow</tissue>
    </source>
</reference>
<reference key="2">
    <citation type="journal article" date="2004" name="Nat. Genet.">
        <title>Complete sequencing and characterization of 21,243 full-length human cDNAs.</title>
        <authorList>
            <person name="Ota T."/>
            <person name="Suzuki Y."/>
            <person name="Nishikawa T."/>
            <person name="Otsuki T."/>
            <person name="Sugiyama T."/>
            <person name="Irie R."/>
            <person name="Wakamatsu A."/>
            <person name="Hayashi K."/>
            <person name="Sato H."/>
            <person name="Nagai K."/>
            <person name="Kimura K."/>
            <person name="Makita H."/>
            <person name="Sekine M."/>
            <person name="Obayashi M."/>
            <person name="Nishi T."/>
            <person name="Shibahara T."/>
            <person name="Tanaka T."/>
            <person name="Ishii S."/>
            <person name="Yamamoto J."/>
            <person name="Saito K."/>
            <person name="Kawai Y."/>
            <person name="Isono Y."/>
            <person name="Nakamura Y."/>
            <person name="Nagahari K."/>
            <person name="Murakami K."/>
            <person name="Yasuda T."/>
            <person name="Iwayanagi T."/>
            <person name="Wagatsuma M."/>
            <person name="Shiratori A."/>
            <person name="Sudo H."/>
            <person name="Hosoiri T."/>
            <person name="Kaku Y."/>
            <person name="Kodaira H."/>
            <person name="Kondo H."/>
            <person name="Sugawara M."/>
            <person name="Takahashi M."/>
            <person name="Kanda K."/>
            <person name="Yokoi T."/>
            <person name="Furuya T."/>
            <person name="Kikkawa E."/>
            <person name="Omura Y."/>
            <person name="Abe K."/>
            <person name="Kamihara K."/>
            <person name="Katsuta N."/>
            <person name="Sato K."/>
            <person name="Tanikawa M."/>
            <person name="Yamazaki M."/>
            <person name="Ninomiya K."/>
            <person name="Ishibashi T."/>
            <person name="Yamashita H."/>
            <person name="Murakawa K."/>
            <person name="Fujimori K."/>
            <person name="Tanai H."/>
            <person name="Kimata M."/>
            <person name="Watanabe M."/>
            <person name="Hiraoka S."/>
            <person name="Chiba Y."/>
            <person name="Ishida S."/>
            <person name="Ono Y."/>
            <person name="Takiguchi S."/>
            <person name="Watanabe S."/>
            <person name="Yosida M."/>
            <person name="Hotuta T."/>
            <person name="Kusano J."/>
            <person name="Kanehori K."/>
            <person name="Takahashi-Fujii A."/>
            <person name="Hara H."/>
            <person name="Tanase T.-O."/>
            <person name="Nomura Y."/>
            <person name="Togiya S."/>
            <person name="Komai F."/>
            <person name="Hara R."/>
            <person name="Takeuchi K."/>
            <person name="Arita M."/>
            <person name="Imose N."/>
            <person name="Musashino K."/>
            <person name="Yuuki H."/>
            <person name="Oshima A."/>
            <person name="Sasaki N."/>
            <person name="Aotsuka S."/>
            <person name="Yoshikawa Y."/>
            <person name="Matsunawa H."/>
            <person name="Ichihara T."/>
            <person name="Shiohata N."/>
            <person name="Sano S."/>
            <person name="Moriya S."/>
            <person name="Momiyama H."/>
            <person name="Satoh N."/>
            <person name="Takami S."/>
            <person name="Terashima Y."/>
            <person name="Suzuki O."/>
            <person name="Nakagawa S."/>
            <person name="Senoh A."/>
            <person name="Mizoguchi H."/>
            <person name="Goto Y."/>
            <person name="Shimizu F."/>
            <person name="Wakebe H."/>
            <person name="Hishigaki H."/>
            <person name="Watanabe T."/>
            <person name="Sugiyama A."/>
            <person name="Takemoto M."/>
            <person name="Kawakami B."/>
            <person name="Yamazaki M."/>
            <person name="Watanabe K."/>
            <person name="Kumagai A."/>
            <person name="Itakura S."/>
            <person name="Fukuzumi Y."/>
            <person name="Fujimori Y."/>
            <person name="Komiyama M."/>
            <person name="Tashiro H."/>
            <person name="Tanigami A."/>
            <person name="Fujiwara T."/>
            <person name="Ono T."/>
            <person name="Yamada K."/>
            <person name="Fujii Y."/>
            <person name="Ozaki K."/>
            <person name="Hirao M."/>
            <person name="Ohmori Y."/>
            <person name="Kawabata A."/>
            <person name="Hikiji T."/>
            <person name="Kobatake N."/>
            <person name="Inagaki H."/>
            <person name="Ikema Y."/>
            <person name="Okamoto S."/>
            <person name="Okitani R."/>
            <person name="Kawakami T."/>
            <person name="Noguchi S."/>
            <person name="Itoh T."/>
            <person name="Shigeta K."/>
            <person name="Senba T."/>
            <person name="Matsumura K."/>
            <person name="Nakajima Y."/>
            <person name="Mizuno T."/>
            <person name="Morinaga M."/>
            <person name="Sasaki M."/>
            <person name="Togashi T."/>
            <person name="Oyama M."/>
            <person name="Hata H."/>
            <person name="Watanabe M."/>
            <person name="Komatsu T."/>
            <person name="Mizushima-Sugano J."/>
            <person name="Satoh T."/>
            <person name="Shirai Y."/>
            <person name="Takahashi Y."/>
            <person name="Nakagawa K."/>
            <person name="Okumura K."/>
            <person name="Nagase T."/>
            <person name="Nomura N."/>
            <person name="Kikuchi H."/>
            <person name="Masuho Y."/>
            <person name="Yamashita R."/>
            <person name="Nakai K."/>
            <person name="Yada T."/>
            <person name="Nakamura Y."/>
            <person name="Ohara O."/>
            <person name="Isogai T."/>
            <person name="Sugano S."/>
        </authorList>
    </citation>
    <scope>NUCLEOTIDE SEQUENCE [LARGE SCALE MRNA] (ISOFORM 3)</scope>
</reference>
<reference key="3">
    <citation type="submission" date="2001-11" db="EMBL/GenBank/DDBJ databases">
        <authorList>
            <person name="Guo J.H."/>
            <person name="Zan Q."/>
            <person name="Yu L."/>
        </authorList>
    </citation>
    <scope>NUCLEOTIDE SEQUENCE [LARGE SCALE MRNA]</scope>
    <source>
        <tissue>Brain</tissue>
    </source>
</reference>
<reference key="4">
    <citation type="submission" date="2005-04" db="EMBL/GenBank/DDBJ databases">
        <authorList>
            <person name="Suzuki Y."/>
            <person name="Sugano S."/>
            <person name="Totoki Y."/>
            <person name="Toyoda A."/>
            <person name="Takeda T."/>
            <person name="Sakaki Y."/>
            <person name="Tanaka A."/>
            <person name="Yokoyama S."/>
        </authorList>
    </citation>
    <scope>NUCLEOTIDE SEQUENCE [LARGE SCALE MRNA] (ISOFORM 2)</scope>
    <scope>VARIANT VAL-212</scope>
    <source>
        <tissue>Colon</tissue>
    </source>
</reference>
<reference key="5">
    <citation type="journal article" date="2003" name="Nature">
        <title>The DNA sequence and analysis of human chromosome 6.</title>
        <authorList>
            <person name="Mungall A.J."/>
            <person name="Palmer S.A."/>
            <person name="Sims S.K."/>
            <person name="Edwards C.A."/>
            <person name="Ashurst J.L."/>
            <person name="Wilming L."/>
            <person name="Jones M.C."/>
            <person name="Horton R."/>
            <person name="Hunt S.E."/>
            <person name="Scott C.E."/>
            <person name="Gilbert J.G.R."/>
            <person name="Clamp M.E."/>
            <person name="Bethel G."/>
            <person name="Milne S."/>
            <person name="Ainscough R."/>
            <person name="Almeida J.P."/>
            <person name="Ambrose K.D."/>
            <person name="Andrews T.D."/>
            <person name="Ashwell R.I.S."/>
            <person name="Babbage A.K."/>
            <person name="Bagguley C.L."/>
            <person name="Bailey J."/>
            <person name="Banerjee R."/>
            <person name="Barker D.J."/>
            <person name="Barlow K.F."/>
            <person name="Bates K."/>
            <person name="Beare D.M."/>
            <person name="Beasley H."/>
            <person name="Beasley O."/>
            <person name="Bird C.P."/>
            <person name="Blakey S.E."/>
            <person name="Bray-Allen S."/>
            <person name="Brook J."/>
            <person name="Brown A.J."/>
            <person name="Brown J.Y."/>
            <person name="Burford D.C."/>
            <person name="Burrill W."/>
            <person name="Burton J."/>
            <person name="Carder C."/>
            <person name="Carter N.P."/>
            <person name="Chapman J.C."/>
            <person name="Clark S.Y."/>
            <person name="Clark G."/>
            <person name="Clee C.M."/>
            <person name="Clegg S."/>
            <person name="Cobley V."/>
            <person name="Collier R.E."/>
            <person name="Collins J.E."/>
            <person name="Colman L.K."/>
            <person name="Corby N.R."/>
            <person name="Coville G.J."/>
            <person name="Culley K.M."/>
            <person name="Dhami P."/>
            <person name="Davies J."/>
            <person name="Dunn M."/>
            <person name="Earthrowl M.E."/>
            <person name="Ellington A.E."/>
            <person name="Evans K.A."/>
            <person name="Faulkner L."/>
            <person name="Francis M.D."/>
            <person name="Frankish A."/>
            <person name="Frankland J."/>
            <person name="French L."/>
            <person name="Garner P."/>
            <person name="Garnett J."/>
            <person name="Ghori M.J."/>
            <person name="Gilby L.M."/>
            <person name="Gillson C.J."/>
            <person name="Glithero R.J."/>
            <person name="Grafham D.V."/>
            <person name="Grant M."/>
            <person name="Gribble S."/>
            <person name="Griffiths C."/>
            <person name="Griffiths M.N.D."/>
            <person name="Hall R."/>
            <person name="Halls K.S."/>
            <person name="Hammond S."/>
            <person name="Harley J.L."/>
            <person name="Hart E.A."/>
            <person name="Heath P.D."/>
            <person name="Heathcott R."/>
            <person name="Holmes S.J."/>
            <person name="Howden P.J."/>
            <person name="Howe K.L."/>
            <person name="Howell G.R."/>
            <person name="Huckle E."/>
            <person name="Humphray S.J."/>
            <person name="Humphries M.D."/>
            <person name="Hunt A.R."/>
            <person name="Johnson C.M."/>
            <person name="Joy A.A."/>
            <person name="Kay M."/>
            <person name="Keenan S.J."/>
            <person name="Kimberley A.M."/>
            <person name="King A."/>
            <person name="Laird G.K."/>
            <person name="Langford C."/>
            <person name="Lawlor S."/>
            <person name="Leongamornlert D.A."/>
            <person name="Leversha M."/>
            <person name="Lloyd C.R."/>
            <person name="Lloyd D.M."/>
            <person name="Loveland J.E."/>
            <person name="Lovell J."/>
            <person name="Martin S."/>
            <person name="Mashreghi-Mohammadi M."/>
            <person name="Maslen G.L."/>
            <person name="Matthews L."/>
            <person name="McCann O.T."/>
            <person name="McLaren S.J."/>
            <person name="McLay K."/>
            <person name="McMurray A."/>
            <person name="Moore M.J.F."/>
            <person name="Mullikin J.C."/>
            <person name="Niblett D."/>
            <person name="Nickerson T."/>
            <person name="Novik K.L."/>
            <person name="Oliver K."/>
            <person name="Overton-Larty E.K."/>
            <person name="Parker A."/>
            <person name="Patel R."/>
            <person name="Pearce A.V."/>
            <person name="Peck A.I."/>
            <person name="Phillimore B.J.C.T."/>
            <person name="Phillips S."/>
            <person name="Plumb R.W."/>
            <person name="Porter K.M."/>
            <person name="Ramsey Y."/>
            <person name="Ranby S.A."/>
            <person name="Rice C.M."/>
            <person name="Ross M.T."/>
            <person name="Searle S.M."/>
            <person name="Sehra H.K."/>
            <person name="Sheridan E."/>
            <person name="Skuce C.D."/>
            <person name="Smith S."/>
            <person name="Smith M."/>
            <person name="Spraggon L."/>
            <person name="Squares S.L."/>
            <person name="Steward C.A."/>
            <person name="Sycamore N."/>
            <person name="Tamlyn-Hall G."/>
            <person name="Tester J."/>
            <person name="Theaker A.J."/>
            <person name="Thomas D.W."/>
            <person name="Thorpe A."/>
            <person name="Tracey A."/>
            <person name="Tromans A."/>
            <person name="Tubby B."/>
            <person name="Wall M."/>
            <person name="Wallis J.M."/>
            <person name="West A.P."/>
            <person name="White S.S."/>
            <person name="Whitehead S.L."/>
            <person name="Whittaker H."/>
            <person name="Wild A."/>
            <person name="Willey D.J."/>
            <person name="Wilmer T.E."/>
            <person name="Wood J.M."/>
            <person name="Wray P.W."/>
            <person name="Wyatt J.C."/>
            <person name="Young L."/>
            <person name="Younger R.M."/>
            <person name="Bentley D.R."/>
            <person name="Coulson A."/>
            <person name="Durbin R.M."/>
            <person name="Hubbard T."/>
            <person name="Sulston J.E."/>
            <person name="Dunham I."/>
            <person name="Rogers J."/>
            <person name="Beck S."/>
        </authorList>
    </citation>
    <scope>NUCLEOTIDE SEQUENCE [LARGE SCALE GENOMIC DNA]</scope>
    <scope>ALTERNATIVE SPLICING</scope>
</reference>
<reference key="6">
    <citation type="journal article" date="2004" name="Genome Res.">
        <title>The status, quality, and expansion of the NIH full-length cDNA project: the Mammalian Gene Collection (MGC).</title>
        <authorList>
            <consortium name="The MGC Project Team"/>
        </authorList>
    </citation>
    <scope>NUCLEOTIDE SEQUENCE [LARGE SCALE MRNA] (ISOFORMS 1 AND 2)</scope>
    <source>
        <tissue>Brain</tissue>
        <tissue>Ovary</tissue>
    </source>
</reference>
<reference key="7">
    <citation type="journal article" date="2007" name="BMC Genomics">
        <title>The full-ORF clone resource of the German cDNA consortium.</title>
        <authorList>
            <person name="Bechtel S."/>
            <person name="Rosenfelder H."/>
            <person name="Duda A."/>
            <person name="Schmidt C.P."/>
            <person name="Ernst U."/>
            <person name="Wellenreuther R."/>
            <person name="Mehrle A."/>
            <person name="Schuster C."/>
            <person name="Bahr A."/>
            <person name="Bloecker H."/>
            <person name="Heubner D."/>
            <person name="Hoerlein A."/>
            <person name="Michel G."/>
            <person name="Wedler H."/>
            <person name="Koehrer K."/>
            <person name="Ottenwaelder B."/>
            <person name="Poustka A."/>
            <person name="Wiemann S."/>
            <person name="Schupp I."/>
        </authorList>
    </citation>
    <scope>NUCLEOTIDE SEQUENCE [LARGE SCALE MRNA] OF 248-467</scope>
    <source>
        <tissue>Testis</tissue>
    </source>
</reference>
<reference key="8">
    <citation type="journal article" date="2010" name="Sci. Signal.">
        <title>Quantitative phosphoproteomics reveals widespread full phosphorylation site occupancy during mitosis.</title>
        <authorList>
            <person name="Olsen J.V."/>
            <person name="Vermeulen M."/>
            <person name="Santamaria A."/>
            <person name="Kumar C."/>
            <person name="Miller M.L."/>
            <person name="Jensen L.J."/>
            <person name="Gnad F."/>
            <person name="Cox J."/>
            <person name="Jensen T.S."/>
            <person name="Nigg E.A."/>
            <person name="Brunak S."/>
            <person name="Mann M."/>
        </authorList>
    </citation>
    <scope>IDENTIFICATION BY MASS SPECTROMETRY [LARGE SCALE ANALYSIS]</scope>
    <source>
        <tissue>Cervix carcinoma</tissue>
    </source>
</reference>
<reference key="9">
    <citation type="journal article" date="2011" name="BMC Syst. Biol.">
        <title>Initial characterization of the human central proteome.</title>
        <authorList>
            <person name="Burkard T.R."/>
            <person name="Planyavsky M."/>
            <person name="Kaupe I."/>
            <person name="Breitwieser F.P."/>
            <person name="Buerckstuemmer T."/>
            <person name="Bennett K.L."/>
            <person name="Superti-Furga G."/>
            <person name="Colinge J."/>
        </authorList>
    </citation>
    <scope>IDENTIFICATION BY MASS SPECTROMETRY [LARGE SCALE ANALYSIS]</scope>
</reference>
<reference key="10">
    <citation type="submission" date="2005-11" db="PDB data bank">
        <title>Solution structure of ARFGAP domain from human SMAP1.</title>
        <authorList>
            <consortium name="RIKEN structural genomics initiative (RSGI)"/>
        </authorList>
    </citation>
    <scope>STRUCTURE BY NMR OF 9-136 IN COMPLEX WITH ZINC IONS</scope>
</reference>
<gene>
    <name type="primary">SMAP1</name>
</gene>
<organism>
    <name type="scientific">Homo sapiens</name>
    <name type="common">Human</name>
    <dbReference type="NCBI Taxonomy" id="9606"/>
    <lineage>
        <taxon>Eukaryota</taxon>
        <taxon>Metazoa</taxon>
        <taxon>Chordata</taxon>
        <taxon>Craniata</taxon>
        <taxon>Vertebrata</taxon>
        <taxon>Euteleostomi</taxon>
        <taxon>Mammalia</taxon>
        <taxon>Eutheria</taxon>
        <taxon>Euarchontoglires</taxon>
        <taxon>Primates</taxon>
        <taxon>Haplorrhini</taxon>
        <taxon>Catarrhini</taxon>
        <taxon>Hominidae</taxon>
        <taxon>Homo</taxon>
    </lineage>
</organism>